<organism>
    <name type="scientific">Caldicellulosiruptor bescii (strain ATCC BAA-1888 / DSM 6725 / KCTC 15123 / Z-1320)</name>
    <name type="common">Anaerocellum thermophilum</name>
    <dbReference type="NCBI Taxonomy" id="521460"/>
    <lineage>
        <taxon>Bacteria</taxon>
        <taxon>Bacillati</taxon>
        <taxon>Bacillota</taxon>
        <taxon>Bacillota incertae sedis</taxon>
        <taxon>Caldicellulosiruptorales</taxon>
        <taxon>Caldicellulosiruptoraceae</taxon>
        <taxon>Caldicellulosiruptor</taxon>
    </lineage>
</organism>
<protein>
    <recommendedName>
        <fullName evidence="1">tRNA dimethylallyltransferase</fullName>
        <ecNumber evidence="1">2.5.1.75</ecNumber>
    </recommendedName>
    <alternativeName>
        <fullName evidence="1">Dimethylallyl diphosphate:tRNA dimethylallyltransferase</fullName>
        <shortName evidence="1">DMAPP:tRNA dimethylallyltransferase</shortName>
        <shortName evidence="1">DMATase</shortName>
    </alternativeName>
    <alternativeName>
        <fullName evidence="1">Isopentenyl-diphosphate:tRNA isopentenyltransferase</fullName>
        <shortName evidence="1">IPP transferase</shortName>
        <shortName evidence="1">IPPT</shortName>
        <shortName evidence="1">IPTase</shortName>
    </alternativeName>
</protein>
<reference key="1">
    <citation type="submission" date="2009-01" db="EMBL/GenBank/DDBJ databases">
        <title>Complete sequence of chromosome of Caldicellulosiruptor becscii DSM 6725.</title>
        <authorList>
            <person name="Lucas S."/>
            <person name="Copeland A."/>
            <person name="Lapidus A."/>
            <person name="Glavina del Rio T."/>
            <person name="Tice H."/>
            <person name="Bruce D."/>
            <person name="Goodwin L."/>
            <person name="Pitluck S."/>
            <person name="Sims D."/>
            <person name="Meincke L."/>
            <person name="Brettin T."/>
            <person name="Detter J.C."/>
            <person name="Han C."/>
            <person name="Larimer F."/>
            <person name="Land M."/>
            <person name="Hauser L."/>
            <person name="Kyrpides N."/>
            <person name="Ovchinnikova G."/>
            <person name="Kataeva I."/>
            <person name="Adams M.W.W."/>
        </authorList>
    </citation>
    <scope>NUCLEOTIDE SEQUENCE [LARGE SCALE GENOMIC DNA]</scope>
    <source>
        <strain>ATCC BAA-1888 / DSM 6725 / KCTC 15123 / Z-1320</strain>
    </source>
</reference>
<name>MIAA_CALBD</name>
<sequence>MEKIPLIVIAGLTATGKTDVAVELAQLVNGEIVSADSMCVYKLMDIGTAKPTKEQREAVRHHVIDVVFPDEDYNVAMFQKDATNAILDIYKRGKVPLLVGGTGFYIKSVVDDIEFPEMGDSKQVRKKLFDELNNKGNMYLYELLKEIDKDAANSVHPNNVKRVIRYLEIYFLTGKKPTEFLDKVRRKGSERYNVLPLCFIMEREALWQRIDQRVEKMFDMGLADEVKMLLDMGYSKDLKSMQGLGYKQVIPYVEGKISLQEAKEELKIRTRQFAKRQRIWFKYQGEFVFLDVTGMRFEEVVKKCFELCKSVV</sequence>
<dbReference type="EC" id="2.5.1.75" evidence="1"/>
<dbReference type="EMBL" id="CP001393">
    <property type="protein sequence ID" value="ACM60596.1"/>
    <property type="molecule type" value="Genomic_DNA"/>
</dbReference>
<dbReference type="RefSeq" id="WP_015907952.1">
    <property type="nucleotide sequence ID" value="NC_012034.1"/>
</dbReference>
<dbReference type="SMR" id="B9MJT8"/>
<dbReference type="STRING" id="521460.Athe_1498"/>
<dbReference type="GeneID" id="31772843"/>
<dbReference type="KEGG" id="ate:Athe_1498"/>
<dbReference type="eggNOG" id="COG0324">
    <property type="taxonomic scope" value="Bacteria"/>
</dbReference>
<dbReference type="HOGENOM" id="CLU_032616_0_1_9"/>
<dbReference type="Proteomes" id="UP000007723">
    <property type="component" value="Chromosome"/>
</dbReference>
<dbReference type="GO" id="GO:0005524">
    <property type="term" value="F:ATP binding"/>
    <property type="evidence" value="ECO:0007669"/>
    <property type="project" value="UniProtKB-UniRule"/>
</dbReference>
<dbReference type="GO" id="GO:0052381">
    <property type="term" value="F:tRNA dimethylallyltransferase activity"/>
    <property type="evidence" value="ECO:0007669"/>
    <property type="project" value="UniProtKB-UniRule"/>
</dbReference>
<dbReference type="GO" id="GO:0006400">
    <property type="term" value="P:tRNA modification"/>
    <property type="evidence" value="ECO:0007669"/>
    <property type="project" value="TreeGrafter"/>
</dbReference>
<dbReference type="Gene3D" id="1.10.20.140">
    <property type="match status" value="1"/>
</dbReference>
<dbReference type="Gene3D" id="3.40.50.300">
    <property type="entry name" value="P-loop containing nucleotide triphosphate hydrolases"/>
    <property type="match status" value="1"/>
</dbReference>
<dbReference type="HAMAP" id="MF_00185">
    <property type="entry name" value="IPP_trans"/>
    <property type="match status" value="1"/>
</dbReference>
<dbReference type="InterPro" id="IPR039657">
    <property type="entry name" value="Dimethylallyltransferase"/>
</dbReference>
<dbReference type="InterPro" id="IPR018022">
    <property type="entry name" value="IPT"/>
</dbReference>
<dbReference type="InterPro" id="IPR027417">
    <property type="entry name" value="P-loop_NTPase"/>
</dbReference>
<dbReference type="NCBIfam" id="TIGR00174">
    <property type="entry name" value="miaA"/>
    <property type="match status" value="1"/>
</dbReference>
<dbReference type="PANTHER" id="PTHR11088">
    <property type="entry name" value="TRNA DIMETHYLALLYLTRANSFERASE"/>
    <property type="match status" value="1"/>
</dbReference>
<dbReference type="PANTHER" id="PTHR11088:SF60">
    <property type="entry name" value="TRNA DIMETHYLALLYLTRANSFERASE"/>
    <property type="match status" value="1"/>
</dbReference>
<dbReference type="Pfam" id="PF01715">
    <property type="entry name" value="IPPT"/>
    <property type="match status" value="1"/>
</dbReference>
<dbReference type="SUPFAM" id="SSF52540">
    <property type="entry name" value="P-loop containing nucleoside triphosphate hydrolases"/>
    <property type="match status" value="2"/>
</dbReference>
<comment type="function">
    <text evidence="1">Catalyzes the transfer of a dimethylallyl group onto the adenine at position 37 in tRNAs that read codons beginning with uridine, leading to the formation of N6-(dimethylallyl)adenosine (i(6)A).</text>
</comment>
<comment type="catalytic activity">
    <reaction evidence="1">
        <text>adenosine(37) in tRNA + dimethylallyl diphosphate = N(6)-dimethylallyladenosine(37) in tRNA + diphosphate</text>
        <dbReference type="Rhea" id="RHEA:26482"/>
        <dbReference type="Rhea" id="RHEA-COMP:10162"/>
        <dbReference type="Rhea" id="RHEA-COMP:10375"/>
        <dbReference type="ChEBI" id="CHEBI:33019"/>
        <dbReference type="ChEBI" id="CHEBI:57623"/>
        <dbReference type="ChEBI" id="CHEBI:74411"/>
        <dbReference type="ChEBI" id="CHEBI:74415"/>
        <dbReference type="EC" id="2.5.1.75"/>
    </reaction>
</comment>
<comment type="cofactor">
    <cofactor evidence="1">
        <name>Mg(2+)</name>
        <dbReference type="ChEBI" id="CHEBI:18420"/>
    </cofactor>
</comment>
<comment type="subunit">
    <text evidence="1">Monomer.</text>
</comment>
<comment type="similarity">
    <text evidence="1">Belongs to the IPP transferase family.</text>
</comment>
<gene>
    <name evidence="1" type="primary">miaA</name>
    <name type="ordered locus">Athe_1498</name>
</gene>
<feature type="chain" id="PRO_0000377060" description="tRNA dimethylallyltransferase">
    <location>
        <begin position="1"/>
        <end position="312"/>
    </location>
</feature>
<feature type="region of interest" description="Interaction with substrate tRNA" evidence="1">
    <location>
        <begin position="36"/>
        <end position="39"/>
    </location>
</feature>
<feature type="binding site" evidence="1">
    <location>
        <begin position="11"/>
        <end position="18"/>
    </location>
    <ligand>
        <name>ATP</name>
        <dbReference type="ChEBI" id="CHEBI:30616"/>
    </ligand>
</feature>
<feature type="binding site" evidence="1">
    <location>
        <begin position="13"/>
        <end position="18"/>
    </location>
    <ligand>
        <name>substrate</name>
    </ligand>
</feature>
<feature type="site" description="Interaction with substrate tRNA" evidence="1">
    <location>
        <position position="102"/>
    </location>
</feature>
<feature type="site" description="Interaction with substrate tRNA" evidence="1">
    <location>
        <position position="125"/>
    </location>
</feature>
<proteinExistence type="inferred from homology"/>
<keyword id="KW-0067">ATP-binding</keyword>
<keyword id="KW-0460">Magnesium</keyword>
<keyword id="KW-0547">Nucleotide-binding</keyword>
<keyword id="KW-0808">Transferase</keyword>
<keyword id="KW-0819">tRNA processing</keyword>
<accession>B9MJT8</accession>
<evidence type="ECO:0000255" key="1">
    <source>
        <dbReference type="HAMAP-Rule" id="MF_00185"/>
    </source>
</evidence>